<feature type="signal peptide" evidence="1">
    <location>
        <begin position="1"/>
        <end position="19"/>
    </location>
</feature>
<feature type="chain" id="PRO_0000291435" description="Type IV secretion system protein virB9">
    <location>
        <begin position="20"/>
        <end position="289"/>
    </location>
</feature>
<sequence length="289" mass="31951">MKRFLLACILITLASPSWATKIPSGSKYDSRIQYVDYNSGDVVLVRALPGVGARIVFAPGENIEDVASGFTQGWEFKASHNILYLKARSMTLSHSNQSIDMAPEPGKWDTNLMVTTDQRMYDFDLRLMPGRNNQRVAYRVQFRYPAAAAAAAVAAAQKRVVQARMNARPSPVNWNYTMQVGTNSASIAPTLAYDDGRFTYLRFPNNRDFPAAFLVAEDKSESIVNSHIDPSAPDILVLHRVAKQMVLRLGNKVIGIYNESFNPDGVPARDGTTVPGVKRVIKSPGENLQ</sequence>
<keyword id="KW-0732">Signal</keyword>
<keyword id="KW-0843">Virulence</keyword>
<dbReference type="EMBL" id="AF141604">
    <property type="protein sequence ID" value="AAD56619.1"/>
    <property type="molecule type" value="Genomic_DNA"/>
</dbReference>
<dbReference type="EMBL" id="AE014292">
    <property type="protein sequence ID" value="AAN33273.1"/>
    <property type="molecule type" value="Genomic_DNA"/>
</dbReference>
<dbReference type="EMBL" id="CP002998">
    <property type="protein sequence ID" value="AEM19553.1"/>
    <property type="molecule type" value="Genomic_DNA"/>
</dbReference>
<dbReference type="RefSeq" id="WP_002966518.1">
    <property type="nucleotide sequence ID" value="NZ_KN046805.1"/>
</dbReference>
<dbReference type="SMR" id="Q9RPX6"/>
<dbReference type="TCDB" id="3.A.7.3.1">
    <property type="family name" value="the type iv (conjugal dna-protein transfer or virb) secretory pathway (ivsp) family"/>
</dbReference>
<dbReference type="GeneID" id="93015962"/>
<dbReference type="KEGG" id="bms:BRA0061"/>
<dbReference type="KEGG" id="bsi:BS1330_II0061"/>
<dbReference type="PATRIC" id="fig|204722.21.peg.2309"/>
<dbReference type="HOGENOM" id="CLU_058585_3_0_5"/>
<dbReference type="PhylomeDB" id="Q9RPX6"/>
<dbReference type="PRO" id="PR:Q9RPX6"/>
<dbReference type="Proteomes" id="UP000007104">
    <property type="component" value="Chromosome II"/>
</dbReference>
<dbReference type="CDD" id="cd06911">
    <property type="entry name" value="VirB9_CagX_TrbG"/>
    <property type="match status" value="1"/>
</dbReference>
<dbReference type="Gene3D" id="2.60.40.2500">
    <property type="match status" value="1"/>
</dbReference>
<dbReference type="InterPro" id="IPR010258">
    <property type="entry name" value="Conjugal_tfr_TrbG/VirB9/CagX"/>
</dbReference>
<dbReference type="InterPro" id="IPR014148">
    <property type="entry name" value="VirB9"/>
</dbReference>
<dbReference type="InterPro" id="IPR033645">
    <property type="entry name" value="VirB9/CagX/TrbG_C"/>
</dbReference>
<dbReference type="InterPro" id="IPR038161">
    <property type="entry name" value="VirB9/CagX/TrbG_C_sf"/>
</dbReference>
<dbReference type="NCBIfam" id="TIGR02781">
    <property type="entry name" value="VirB9"/>
    <property type="match status" value="1"/>
</dbReference>
<dbReference type="Pfam" id="PF03524">
    <property type="entry name" value="CagX"/>
    <property type="match status" value="1"/>
</dbReference>
<reference key="1">
    <citation type="journal article" date="1999" name="Mol. Microbiol.">
        <title>A homologue of the Agrobacterium tumefaciens VirB and Bordetella pertussis Ptl type IV secretion systems is essential for intracellular survival of Brucella suis.</title>
        <authorList>
            <person name="O'Callaghan D."/>
            <person name="Cazevieille C."/>
            <person name="Allardet-Servent A."/>
            <person name="Boschiroli M.L."/>
            <person name="Bourg G."/>
            <person name="Foulongne V."/>
            <person name="Frutos P."/>
            <person name="Kulakov Y."/>
            <person name="Ramuz M."/>
        </authorList>
    </citation>
    <scope>NUCLEOTIDE SEQUENCE [GENOMIC DNA]</scope>
    <source>
        <strain>1330</strain>
    </source>
</reference>
<reference key="2">
    <citation type="journal article" date="2002" name="Proc. Natl. Acad. Sci. U.S.A.">
        <title>The Brucella suis virB operon is induced intracellularly in macrophages.</title>
        <authorList>
            <person name="Boschiroli M.L."/>
            <person name="Ouahrani-Bettache S."/>
            <person name="Foulongne V."/>
            <person name="Michaux-Charachon S."/>
            <person name="Bourg G."/>
            <person name="Allardet-Servent A."/>
            <person name="Cazevieille C."/>
            <person name="Liautard J.P."/>
            <person name="Ramuz M."/>
            <person name="O'Callaghan D."/>
        </authorList>
    </citation>
    <scope>NUCLEOTIDE SEQUENCE [GENOMIC DNA]</scope>
    <scope>EXPRESSION CONDITIONS</scope>
    <source>
        <strain>1330</strain>
    </source>
</reference>
<reference key="3">
    <citation type="journal article" date="2002" name="Proc. Natl. Acad. Sci. U.S.A.">
        <title>The Brucella suis genome reveals fundamental similarities between animal and plant pathogens and symbionts.</title>
        <authorList>
            <person name="Paulsen I.T."/>
            <person name="Seshadri R."/>
            <person name="Nelson K.E."/>
            <person name="Eisen J.A."/>
            <person name="Heidelberg J.F."/>
            <person name="Read T.D."/>
            <person name="Dodson R.J."/>
            <person name="Umayam L.A."/>
            <person name="Brinkac L.M."/>
            <person name="Beanan M.J."/>
            <person name="Daugherty S.C."/>
            <person name="DeBoy R.T."/>
            <person name="Durkin A.S."/>
            <person name="Kolonay J.F."/>
            <person name="Madupu R."/>
            <person name="Nelson W.C."/>
            <person name="Ayodeji B."/>
            <person name="Kraul M."/>
            <person name="Shetty J."/>
            <person name="Malek J.A."/>
            <person name="Van Aken S.E."/>
            <person name="Riedmuller S."/>
            <person name="Tettelin H."/>
            <person name="Gill S.R."/>
            <person name="White O."/>
            <person name="Salzberg S.L."/>
            <person name="Hoover D.L."/>
            <person name="Lindler L.E."/>
            <person name="Halling S.M."/>
            <person name="Boyle S.M."/>
            <person name="Fraser C.M."/>
        </authorList>
    </citation>
    <scope>NUCLEOTIDE SEQUENCE [LARGE SCALE GENOMIC DNA]</scope>
    <source>
        <strain>1330</strain>
    </source>
</reference>
<reference key="4">
    <citation type="journal article" date="2011" name="J. Bacteriol.">
        <title>Revised genome sequence of Brucella suis 1330.</title>
        <authorList>
            <person name="Tae H."/>
            <person name="Shallom S."/>
            <person name="Settlage R."/>
            <person name="Preston D."/>
            <person name="Adams L.G."/>
            <person name="Garner H.R."/>
        </authorList>
    </citation>
    <scope>NUCLEOTIDE SEQUENCE [LARGE SCALE GENOMIC DNA]</scope>
    <source>
        <strain>1330</strain>
    </source>
</reference>
<evidence type="ECO:0000255" key="1"/>
<evidence type="ECO:0000305" key="2"/>
<gene>
    <name type="primary">virB9</name>
    <name type="ordered locus">BRA0061</name>
    <name type="ordered locus">BS1330_II0061</name>
</gene>
<name>VIRB9_BRUSU</name>
<protein>
    <recommendedName>
        <fullName>Type IV secretion system protein virB9</fullName>
    </recommendedName>
</protein>
<organism>
    <name type="scientific">Brucella suis biovar 1 (strain 1330)</name>
    <dbReference type="NCBI Taxonomy" id="204722"/>
    <lineage>
        <taxon>Bacteria</taxon>
        <taxon>Pseudomonadati</taxon>
        <taxon>Pseudomonadota</taxon>
        <taxon>Alphaproteobacteria</taxon>
        <taxon>Hyphomicrobiales</taxon>
        <taxon>Brucellaceae</taxon>
        <taxon>Brucella/Ochrobactrum group</taxon>
        <taxon>Brucella</taxon>
    </lineage>
</organism>
<comment type="function">
    <text>The VirB system could be required for the establishment of the replication niche in the host.</text>
</comment>
<comment type="induction">
    <text>Specifically induced within macrophages by phagosome acidification. Induced at 37 degrees Celsius in minimal medium, suggesting that nutritional stress is a regulating signal.</text>
</comment>
<comment type="miscellaneous">
    <text>Transcription of the operon is maximal in early exponential phase.</text>
</comment>
<comment type="similarity">
    <text evidence="2">Belongs to the TrbG/VirB9 family.</text>
</comment>
<proteinExistence type="evidence at transcript level"/>
<accession>Q9RPX6</accession>
<accession>G0KEQ9</accession>
<accession>Q7CEG4</accession>